<reference key="1">
    <citation type="submission" date="2004-11" db="EMBL/GenBank/DDBJ databases">
        <authorList>
            <consortium name="The German cDNA consortium"/>
        </authorList>
    </citation>
    <scope>NUCLEOTIDE SEQUENCE [LARGE SCALE MRNA]</scope>
    <source>
        <tissue>Kidney</tissue>
    </source>
</reference>
<sequence length="462" mass="53537">MAKFRRGTCIILALFILFIFSLMMGLKMLRPNTATFGAPFGLDLLPELHQRTVHLGKSFDFQKSDRINSETNTKNLKSVEITMKPSKASELNLDELPPLNNYLHVFYYSWYGNPQFDGKYIHWNHPVLEHWDPRIAKNYPQGRHNPPDDIGSSFYPELGSYSSRDPSVIETHMRQMRSASIGVLALSWYPPDVNDENGEPTDNLVPTILDKAHKYNLKVTFHIEPYSNRDDQNMYKNVKYIIDKYGNHPAFYRYKTKTGNALPMFYVYDSYITKPEKWANLLTTSGSWSIRNSPYDGLFIALLVEEKHKYDILQSGFDGIYTYFATNGFTYGSSHQNWASLKLFCDKYNLIFIPSVGPGYIDTSIRPWNTQNTRNRINGKYYEIALSAALQTHPSLISITSFNEWHEGTQIEKAVPKRTSNTVYLDYRPHKPGLYLELTRKWSEKYSKERATYALDHQLPVS</sequence>
<gene>
    <name type="primary">MANEA</name>
</gene>
<proteinExistence type="evidence at transcript level"/>
<accession>Q5RD93</accession>
<organism>
    <name type="scientific">Pongo abelii</name>
    <name type="common">Sumatran orangutan</name>
    <name type="synonym">Pongo pygmaeus abelii</name>
    <dbReference type="NCBI Taxonomy" id="9601"/>
    <lineage>
        <taxon>Eukaryota</taxon>
        <taxon>Metazoa</taxon>
        <taxon>Chordata</taxon>
        <taxon>Craniata</taxon>
        <taxon>Vertebrata</taxon>
        <taxon>Euteleostomi</taxon>
        <taxon>Mammalia</taxon>
        <taxon>Eutheria</taxon>
        <taxon>Euarchontoglires</taxon>
        <taxon>Primates</taxon>
        <taxon>Haplorrhini</taxon>
        <taxon>Catarrhini</taxon>
        <taxon>Hominidae</taxon>
        <taxon>Pongo</taxon>
    </lineage>
</organism>
<evidence type="ECO:0000250" key="1"/>
<evidence type="ECO:0000250" key="2">
    <source>
        <dbReference type="UniProtKB" id="Q5SRI9"/>
    </source>
</evidence>
<evidence type="ECO:0000255" key="3"/>
<evidence type="ECO:0000305" key="4"/>
<comment type="catalytic activity">
    <reaction evidence="2">
        <text>N-{alpha-Glc-(1-&gt;3)-alpha-Man-(1-&gt;2)-alpha-Man-(1-&gt;2)-alpha-Man-(1-&gt;3)-[alpha-Man-(1-&gt;2)-alpha-Man-(1-&gt;3)-[alpha-Man-(1-&gt;2)-alpha-Man-(1-&gt;6)]-alpha-Man-(1-&gt;6)]-beta-Man-(1-&gt;4)-beta-GlcNAc-(1-&gt;4)-beta-GlcNAc}-L-asparaginyl-[protein] + H2O = alpha-D-glucosyl-(1-&gt;3)-D-mannopyranose + N(4)-{alpha-D-Man-(1-&gt;2)-alpha-D-Man-(1-&gt;3)-[alpha-D-Man-(1-&gt;2)-alpha-D-Man-(1-&gt;3)-[alpha-D-Man-(1-&gt;2)-alpha-D-Man-(1-&gt;6)]-alpha-D-Man-(1-&gt;6)]-beta-D-Man-(1-&gt;4)-beta-D-GlaNAc-(1-&gt;4)-beta-D-GlcNAc}-L-asparaginyl-[protein] (N-glucan mannose isomer 8A1,2,3B1,2)</text>
        <dbReference type="Rhea" id="RHEA:54824"/>
        <dbReference type="Rhea" id="RHEA-COMP:14010"/>
        <dbReference type="Rhea" id="RHEA-COMP:14011"/>
        <dbReference type="ChEBI" id="CHEBI:15377"/>
        <dbReference type="ChEBI" id="CHEBI:52996"/>
        <dbReference type="ChEBI" id="CHEBI:59080"/>
        <dbReference type="ChEBI" id="CHEBI:60627"/>
        <dbReference type="EC" id="3.2.1.130"/>
    </reaction>
</comment>
<comment type="subcellular location">
    <subcellularLocation>
        <location evidence="2">Golgi apparatus membrane</location>
        <topology evidence="2">Single-pass type II membrane protein</topology>
    </subcellularLocation>
</comment>
<comment type="PTM">
    <text evidence="2">Undergoes proteolytic cleavage in the C-terminal region.</text>
</comment>
<comment type="similarity">
    <text evidence="4">Belongs to the glycosyl hydrolase 99 family.</text>
</comment>
<keyword id="KW-0333">Golgi apparatus</keyword>
<keyword id="KW-0378">Hydrolase</keyword>
<keyword id="KW-0472">Membrane</keyword>
<keyword id="KW-1185">Reference proteome</keyword>
<keyword id="KW-0735">Signal-anchor</keyword>
<keyword id="KW-0812">Transmembrane</keyword>
<keyword id="KW-1133">Transmembrane helix</keyword>
<name>MANEA_PONAB</name>
<feature type="chain" id="PRO_0000282317" description="Glycoprotein endo-alpha-1,2-mannosidase">
    <location>
        <begin position="1"/>
        <end position="462"/>
    </location>
</feature>
<feature type="topological domain" description="Cytoplasmic" evidence="3">
    <location>
        <begin position="1"/>
        <end position="8"/>
    </location>
</feature>
<feature type="transmembrane region" description="Helical; Signal-anchor for type II membrane protein" evidence="3">
    <location>
        <begin position="9"/>
        <end position="29"/>
    </location>
</feature>
<feature type="topological domain" description="Lumenal" evidence="3">
    <location>
        <begin position="30"/>
        <end position="462"/>
    </location>
</feature>
<feature type="region of interest" description="Catalytic" evidence="1">
    <location>
        <begin position="60"/>
        <end position="462"/>
    </location>
</feature>
<protein>
    <recommendedName>
        <fullName>Glycoprotein endo-alpha-1,2-mannosidase</fullName>
        <shortName>Endo-alpha mannosidase</shortName>
        <shortName>Endomannosidase</shortName>
        <ecNumber evidence="2">3.2.1.130</ecNumber>
    </recommendedName>
</protein>
<dbReference type="EC" id="3.2.1.130" evidence="2"/>
<dbReference type="EMBL" id="CR858023">
    <property type="protein sequence ID" value="CAH90264.1"/>
    <property type="molecule type" value="mRNA"/>
</dbReference>
<dbReference type="RefSeq" id="NP_001127260.1">
    <property type="nucleotide sequence ID" value="NM_001133788.1"/>
</dbReference>
<dbReference type="SMR" id="Q5RD93"/>
<dbReference type="FunCoup" id="Q5RD93">
    <property type="interactions" value="1137"/>
</dbReference>
<dbReference type="STRING" id="9601.ENSPPYP00000018864"/>
<dbReference type="CAZy" id="GH99">
    <property type="family name" value="Glycoside Hydrolase Family 99"/>
</dbReference>
<dbReference type="GeneID" id="100174316"/>
<dbReference type="KEGG" id="pon:100174316"/>
<dbReference type="CTD" id="79694"/>
<dbReference type="eggNOG" id="ENOG502QPJV">
    <property type="taxonomic scope" value="Eukaryota"/>
</dbReference>
<dbReference type="InParanoid" id="Q5RD93"/>
<dbReference type="OrthoDB" id="406152at2759"/>
<dbReference type="Proteomes" id="UP000001595">
    <property type="component" value="Unplaced"/>
</dbReference>
<dbReference type="GO" id="GO:0000139">
    <property type="term" value="C:Golgi membrane"/>
    <property type="evidence" value="ECO:0007669"/>
    <property type="project" value="UniProtKB-SubCell"/>
</dbReference>
<dbReference type="GO" id="GO:0004569">
    <property type="term" value="F:glycoprotein endo-alpha-1,2-mannosidase activity"/>
    <property type="evidence" value="ECO:0007669"/>
    <property type="project" value="UniProtKB-EC"/>
</dbReference>
<dbReference type="CDD" id="cd11574">
    <property type="entry name" value="GH99"/>
    <property type="match status" value="1"/>
</dbReference>
<dbReference type="FunFam" id="3.20.20.80:FF:000019">
    <property type="entry name" value="glycoprotein endo-alpha-1,2-mannosidase"/>
    <property type="match status" value="1"/>
</dbReference>
<dbReference type="Gene3D" id="3.20.20.80">
    <property type="entry name" value="Glycosidases"/>
    <property type="match status" value="1"/>
</dbReference>
<dbReference type="InterPro" id="IPR026071">
    <property type="entry name" value="Glyco_Hydrolase_99"/>
</dbReference>
<dbReference type="PANTHER" id="PTHR13572">
    <property type="entry name" value="ENDO-ALPHA-1,2-MANNOSIDASE"/>
    <property type="match status" value="1"/>
</dbReference>
<dbReference type="PANTHER" id="PTHR13572:SF1">
    <property type="entry name" value="GLYCOPROTEIN ENDO-ALPHA-1,2-MANNOSIDASE"/>
    <property type="match status" value="1"/>
</dbReference>
<dbReference type="Pfam" id="PF16317">
    <property type="entry name" value="Glyco_hydro_99"/>
    <property type="match status" value="1"/>
</dbReference>